<keyword id="KW-1185">Reference proteome</keyword>
<keyword id="KW-0687">Ribonucleoprotein</keyword>
<keyword id="KW-0689">Ribosomal protein</keyword>
<keyword id="KW-0694">RNA-binding</keyword>
<keyword id="KW-0699">rRNA-binding</keyword>
<comment type="function">
    <text evidence="1">One of the primary rRNA binding proteins, it binds directly to 16S rRNA where it nucleates assembly of the body of the 30S subunit.</text>
</comment>
<comment type="function">
    <text evidence="1">With S5 and S12 plays an important role in translational accuracy.</text>
</comment>
<comment type="subunit">
    <text evidence="1">Part of the 30S ribosomal subunit. Contacts protein S5. The interaction surface between S4 and S5 is involved in control of translational fidelity.</text>
</comment>
<comment type="similarity">
    <text evidence="1">Belongs to the universal ribosomal protein uS4 family.</text>
</comment>
<organism>
    <name type="scientific">Shewanella amazonensis (strain ATCC BAA-1098 / SB2B)</name>
    <dbReference type="NCBI Taxonomy" id="326297"/>
    <lineage>
        <taxon>Bacteria</taxon>
        <taxon>Pseudomonadati</taxon>
        <taxon>Pseudomonadota</taxon>
        <taxon>Gammaproteobacteria</taxon>
        <taxon>Alteromonadales</taxon>
        <taxon>Shewanellaceae</taxon>
        <taxon>Shewanella</taxon>
    </lineage>
</organism>
<sequence length="206" mass="23408">MARYLGPKLKLSRREGTDLFLKSGVRAIDSKCKLETAPGQHGARKPRLSEYGTQLREKQKVRRIYGVLEKQFRNYYKEAARLKGNTGENLLQLLETRLDNVVYRMGFGSTRAEARQLVSHKSVMVNGRVVNIPSFKVSANDVVSIREKSRTQARIKAALEVAAQREKPTWVEVDAAKMEGAFKRLPERSDLSADINEQLIVELYSK</sequence>
<proteinExistence type="inferred from homology"/>
<name>RS4_SHEAM</name>
<protein>
    <recommendedName>
        <fullName evidence="1">Small ribosomal subunit protein uS4</fullName>
    </recommendedName>
    <alternativeName>
        <fullName evidence="2">30S ribosomal protein S4</fullName>
    </alternativeName>
</protein>
<dbReference type="EMBL" id="CP000507">
    <property type="protein sequence ID" value="ABL98448.1"/>
    <property type="molecule type" value="Genomic_DNA"/>
</dbReference>
<dbReference type="RefSeq" id="WP_011758358.1">
    <property type="nucleotide sequence ID" value="NC_008700.1"/>
</dbReference>
<dbReference type="SMR" id="A1S242"/>
<dbReference type="STRING" id="326297.Sama_0237"/>
<dbReference type="KEGG" id="saz:Sama_0237"/>
<dbReference type="eggNOG" id="COG0522">
    <property type="taxonomic scope" value="Bacteria"/>
</dbReference>
<dbReference type="HOGENOM" id="CLU_092403_0_2_6"/>
<dbReference type="OrthoDB" id="9803672at2"/>
<dbReference type="Proteomes" id="UP000009175">
    <property type="component" value="Chromosome"/>
</dbReference>
<dbReference type="GO" id="GO:0015935">
    <property type="term" value="C:small ribosomal subunit"/>
    <property type="evidence" value="ECO:0007669"/>
    <property type="project" value="InterPro"/>
</dbReference>
<dbReference type="GO" id="GO:0019843">
    <property type="term" value="F:rRNA binding"/>
    <property type="evidence" value="ECO:0007669"/>
    <property type="project" value="UniProtKB-UniRule"/>
</dbReference>
<dbReference type="GO" id="GO:0003735">
    <property type="term" value="F:structural constituent of ribosome"/>
    <property type="evidence" value="ECO:0007669"/>
    <property type="project" value="InterPro"/>
</dbReference>
<dbReference type="GO" id="GO:0042274">
    <property type="term" value="P:ribosomal small subunit biogenesis"/>
    <property type="evidence" value="ECO:0007669"/>
    <property type="project" value="TreeGrafter"/>
</dbReference>
<dbReference type="GO" id="GO:0006412">
    <property type="term" value="P:translation"/>
    <property type="evidence" value="ECO:0007669"/>
    <property type="project" value="UniProtKB-UniRule"/>
</dbReference>
<dbReference type="CDD" id="cd00165">
    <property type="entry name" value="S4"/>
    <property type="match status" value="1"/>
</dbReference>
<dbReference type="FunFam" id="1.10.1050.10:FF:000001">
    <property type="entry name" value="30S ribosomal protein S4"/>
    <property type="match status" value="1"/>
</dbReference>
<dbReference type="FunFam" id="3.10.290.10:FF:000001">
    <property type="entry name" value="30S ribosomal protein S4"/>
    <property type="match status" value="1"/>
</dbReference>
<dbReference type="Gene3D" id="1.10.1050.10">
    <property type="entry name" value="Ribosomal Protein S4 Delta 41, Chain A, domain 1"/>
    <property type="match status" value="1"/>
</dbReference>
<dbReference type="Gene3D" id="3.10.290.10">
    <property type="entry name" value="RNA-binding S4 domain"/>
    <property type="match status" value="1"/>
</dbReference>
<dbReference type="HAMAP" id="MF_01306_B">
    <property type="entry name" value="Ribosomal_uS4_B"/>
    <property type="match status" value="1"/>
</dbReference>
<dbReference type="InterPro" id="IPR022801">
    <property type="entry name" value="Ribosomal_uS4"/>
</dbReference>
<dbReference type="InterPro" id="IPR005709">
    <property type="entry name" value="Ribosomal_uS4_bac-type"/>
</dbReference>
<dbReference type="InterPro" id="IPR018079">
    <property type="entry name" value="Ribosomal_uS4_CS"/>
</dbReference>
<dbReference type="InterPro" id="IPR001912">
    <property type="entry name" value="Ribosomal_uS4_N"/>
</dbReference>
<dbReference type="InterPro" id="IPR002942">
    <property type="entry name" value="S4_RNA-bd"/>
</dbReference>
<dbReference type="InterPro" id="IPR036986">
    <property type="entry name" value="S4_RNA-bd_sf"/>
</dbReference>
<dbReference type="NCBIfam" id="NF003717">
    <property type="entry name" value="PRK05327.1"/>
    <property type="match status" value="1"/>
</dbReference>
<dbReference type="NCBIfam" id="TIGR01017">
    <property type="entry name" value="rpsD_bact"/>
    <property type="match status" value="1"/>
</dbReference>
<dbReference type="PANTHER" id="PTHR11831">
    <property type="entry name" value="30S 40S RIBOSOMAL PROTEIN"/>
    <property type="match status" value="1"/>
</dbReference>
<dbReference type="PANTHER" id="PTHR11831:SF4">
    <property type="entry name" value="SMALL RIBOSOMAL SUBUNIT PROTEIN US4M"/>
    <property type="match status" value="1"/>
</dbReference>
<dbReference type="Pfam" id="PF00163">
    <property type="entry name" value="Ribosomal_S4"/>
    <property type="match status" value="1"/>
</dbReference>
<dbReference type="Pfam" id="PF01479">
    <property type="entry name" value="S4"/>
    <property type="match status" value="1"/>
</dbReference>
<dbReference type="SMART" id="SM01390">
    <property type="entry name" value="Ribosomal_S4"/>
    <property type="match status" value="1"/>
</dbReference>
<dbReference type="SMART" id="SM00363">
    <property type="entry name" value="S4"/>
    <property type="match status" value="1"/>
</dbReference>
<dbReference type="SUPFAM" id="SSF55174">
    <property type="entry name" value="Alpha-L RNA-binding motif"/>
    <property type="match status" value="1"/>
</dbReference>
<dbReference type="PROSITE" id="PS00632">
    <property type="entry name" value="RIBOSOMAL_S4"/>
    <property type="match status" value="1"/>
</dbReference>
<dbReference type="PROSITE" id="PS50889">
    <property type="entry name" value="S4"/>
    <property type="match status" value="1"/>
</dbReference>
<reference key="1">
    <citation type="submission" date="2006-12" db="EMBL/GenBank/DDBJ databases">
        <title>Complete sequence of Shewanella amazonensis SB2B.</title>
        <authorList>
            <consortium name="US DOE Joint Genome Institute"/>
            <person name="Copeland A."/>
            <person name="Lucas S."/>
            <person name="Lapidus A."/>
            <person name="Barry K."/>
            <person name="Detter J.C."/>
            <person name="Glavina del Rio T."/>
            <person name="Hammon N."/>
            <person name="Israni S."/>
            <person name="Dalin E."/>
            <person name="Tice H."/>
            <person name="Pitluck S."/>
            <person name="Munk A.C."/>
            <person name="Brettin T."/>
            <person name="Bruce D."/>
            <person name="Han C."/>
            <person name="Tapia R."/>
            <person name="Gilna P."/>
            <person name="Schmutz J."/>
            <person name="Larimer F."/>
            <person name="Land M."/>
            <person name="Hauser L."/>
            <person name="Kyrpides N."/>
            <person name="Mikhailova N."/>
            <person name="Fredrickson J."/>
            <person name="Richardson P."/>
        </authorList>
    </citation>
    <scope>NUCLEOTIDE SEQUENCE [LARGE SCALE GENOMIC DNA]</scope>
    <source>
        <strain>ATCC BAA-1098 / SB2B</strain>
    </source>
</reference>
<feature type="chain" id="PRO_0000293362" description="Small ribosomal subunit protein uS4">
    <location>
        <begin position="1"/>
        <end position="206"/>
    </location>
</feature>
<feature type="domain" description="S4 RNA-binding" evidence="1">
    <location>
        <begin position="96"/>
        <end position="156"/>
    </location>
</feature>
<accession>A1S242</accession>
<evidence type="ECO:0000255" key="1">
    <source>
        <dbReference type="HAMAP-Rule" id="MF_01306"/>
    </source>
</evidence>
<evidence type="ECO:0000305" key="2"/>
<gene>
    <name evidence="1" type="primary">rpsD</name>
    <name type="ordered locus">Sama_0237</name>
</gene>